<accession>O46077</accession>
<accession>Q9W504</accession>
<gene>
    <name type="primary">Or2a</name>
    <name type="synonym">AN4</name>
    <name type="synonym">DOR2F.1</name>
    <name type="synonym">dor62</name>
    <name type="synonym">OR2F.1</name>
    <name type="ORF">CG3206</name>
</gene>
<reference key="1">
    <citation type="journal article" date="1999" name="Genomics">
        <title>Identification of candidate Drosophila olfactory receptors from genomic DNA sequence.</title>
        <authorList>
            <person name="Gao Q."/>
            <person name="Chess A."/>
        </authorList>
    </citation>
    <scope>NUCLEOTIDE SEQUENCE [GENOMIC DNA]</scope>
</reference>
<reference key="2">
    <citation type="journal article" date="2000" name="Science">
        <title>The genome sequence of Drosophila melanogaster.</title>
        <authorList>
            <person name="Adams M.D."/>
            <person name="Celniker S.E."/>
            <person name="Holt R.A."/>
            <person name="Evans C.A."/>
            <person name="Gocayne J.D."/>
            <person name="Amanatides P.G."/>
            <person name="Scherer S.E."/>
            <person name="Li P.W."/>
            <person name="Hoskins R.A."/>
            <person name="Galle R.F."/>
            <person name="George R.A."/>
            <person name="Lewis S.E."/>
            <person name="Richards S."/>
            <person name="Ashburner M."/>
            <person name="Henderson S.N."/>
            <person name="Sutton G.G."/>
            <person name="Wortman J.R."/>
            <person name="Yandell M.D."/>
            <person name="Zhang Q."/>
            <person name="Chen L.X."/>
            <person name="Brandon R.C."/>
            <person name="Rogers Y.-H.C."/>
            <person name="Blazej R.G."/>
            <person name="Champe M."/>
            <person name="Pfeiffer B.D."/>
            <person name="Wan K.H."/>
            <person name="Doyle C."/>
            <person name="Baxter E.G."/>
            <person name="Helt G."/>
            <person name="Nelson C.R."/>
            <person name="Miklos G.L.G."/>
            <person name="Abril J.F."/>
            <person name="Agbayani A."/>
            <person name="An H.-J."/>
            <person name="Andrews-Pfannkoch C."/>
            <person name="Baldwin D."/>
            <person name="Ballew R.M."/>
            <person name="Basu A."/>
            <person name="Baxendale J."/>
            <person name="Bayraktaroglu L."/>
            <person name="Beasley E.M."/>
            <person name="Beeson K.Y."/>
            <person name="Benos P.V."/>
            <person name="Berman B.P."/>
            <person name="Bhandari D."/>
            <person name="Bolshakov S."/>
            <person name="Borkova D."/>
            <person name="Botchan M.R."/>
            <person name="Bouck J."/>
            <person name="Brokstein P."/>
            <person name="Brottier P."/>
            <person name="Burtis K.C."/>
            <person name="Busam D.A."/>
            <person name="Butler H."/>
            <person name="Cadieu E."/>
            <person name="Center A."/>
            <person name="Chandra I."/>
            <person name="Cherry J.M."/>
            <person name="Cawley S."/>
            <person name="Dahlke C."/>
            <person name="Davenport L.B."/>
            <person name="Davies P."/>
            <person name="de Pablos B."/>
            <person name="Delcher A."/>
            <person name="Deng Z."/>
            <person name="Mays A.D."/>
            <person name="Dew I."/>
            <person name="Dietz S.M."/>
            <person name="Dodson K."/>
            <person name="Doup L.E."/>
            <person name="Downes M."/>
            <person name="Dugan-Rocha S."/>
            <person name="Dunkov B.C."/>
            <person name="Dunn P."/>
            <person name="Durbin K.J."/>
            <person name="Evangelista C.C."/>
            <person name="Ferraz C."/>
            <person name="Ferriera S."/>
            <person name="Fleischmann W."/>
            <person name="Fosler C."/>
            <person name="Gabrielian A.E."/>
            <person name="Garg N.S."/>
            <person name="Gelbart W.M."/>
            <person name="Glasser K."/>
            <person name="Glodek A."/>
            <person name="Gong F."/>
            <person name="Gorrell J.H."/>
            <person name="Gu Z."/>
            <person name="Guan P."/>
            <person name="Harris M."/>
            <person name="Harris N.L."/>
            <person name="Harvey D.A."/>
            <person name="Heiman T.J."/>
            <person name="Hernandez J.R."/>
            <person name="Houck J."/>
            <person name="Hostin D."/>
            <person name="Houston K.A."/>
            <person name="Howland T.J."/>
            <person name="Wei M.-H."/>
            <person name="Ibegwam C."/>
            <person name="Jalali M."/>
            <person name="Kalush F."/>
            <person name="Karpen G.H."/>
            <person name="Ke Z."/>
            <person name="Kennison J.A."/>
            <person name="Ketchum K.A."/>
            <person name="Kimmel B.E."/>
            <person name="Kodira C.D."/>
            <person name="Kraft C.L."/>
            <person name="Kravitz S."/>
            <person name="Kulp D."/>
            <person name="Lai Z."/>
            <person name="Lasko P."/>
            <person name="Lei Y."/>
            <person name="Levitsky A.A."/>
            <person name="Li J.H."/>
            <person name="Li Z."/>
            <person name="Liang Y."/>
            <person name="Lin X."/>
            <person name="Liu X."/>
            <person name="Mattei B."/>
            <person name="McIntosh T.C."/>
            <person name="McLeod M.P."/>
            <person name="McPherson D."/>
            <person name="Merkulov G."/>
            <person name="Milshina N.V."/>
            <person name="Mobarry C."/>
            <person name="Morris J."/>
            <person name="Moshrefi A."/>
            <person name="Mount S.M."/>
            <person name="Moy M."/>
            <person name="Murphy B."/>
            <person name="Murphy L."/>
            <person name="Muzny D.M."/>
            <person name="Nelson D.L."/>
            <person name="Nelson D.R."/>
            <person name="Nelson K.A."/>
            <person name="Nixon K."/>
            <person name="Nusskern D.R."/>
            <person name="Pacleb J.M."/>
            <person name="Palazzolo M."/>
            <person name="Pittman G.S."/>
            <person name="Pan S."/>
            <person name="Pollard J."/>
            <person name="Puri V."/>
            <person name="Reese M.G."/>
            <person name="Reinert K."/>
            <person name="Remington K."/>
            <person name="Saunders R.D.C."/>
            <person name="Scheeler F."/>
            <person name="Shen H."/>
            <person name="Shue B.C."/>
            <person name="Siden-Kiamos I."/>
            <person name="Simpson M."/>
            <person name="Skupski M.P."/>
            <person name="Smith T.J."/>
            <person name="Spier E."/>
            <person name="Spradling A.C."/>
            <person name="Stapleton M."/>
            <person name="Strong R."/>
            <person name="Sun E."/>
            <person name="Svirskas R."/>
            <person name="Tector C."/>
            <person name="Turner R."/>
            <person name="Venter E."/>
            <person name="Wang A.H."/>
            <person name="Wang X."/>
            <person name="Wang Z.-Y."/>
            <person name="Wassarman D.A."/>
            <person name="Weinstock G.M."/>
            <person name="Weissenbach J."/>
            <person name="Williams S.M."/>
            <person name="Woodage T."/>
            <person name="Worley K.C."/>
            <person name="Wu D."/>
            <person name="Yang S."/>
            <person name="Yao Q.A."/>
            <person name="Ye J."/>
            <person name="Yeh R.-F."/>
            <person name="Zaveri J.S."/>
            <person name="Zhan M."/>
            <person name="Zhang G."/>
            <person name="Zhao Q."/>
            <person name="Zheng L."/>
            <person name="Zheng X.H."/>
            <person name="Zhong F.N."/>
            <person name="Zhong W."/>
            <person name="Zhou X."/>
            <person name="Zhu S.C."/>
            <person name="Zhu X."/>
            <person name="Smith H.O."/>
            <person name="Gibbs R.A."/>
            <person name="Myers E.W."/>
            <person name="Rubin G.M."/>
            <person name="Venter J.C."/>
        </authorList>
    </citation>
    <scope>NUCLEOTIDE SEQUENCE [LARGE SCALE GENOMIC DNA]</scope>
    <source>
        <strain>Berkeley</strain>
    </source>
</reference>
<reference key="3">
    <citation type="journal article" date="2002" name="Genome Biol.">
        <title>Annotation of the Drosophila melanogaster euchromatic genome: a systematic review.</title>
        <authorList>
            <person name="Misra S."/>
            <person name="Crosby M.A."/>
            <person name="Mungall C.J."/>
            <person name="Matthews B.B."/>
            <person name="Campbell K.S."/>
            <person name="Hradecky P."/>
            <person name="Huang Y."/>
            <person name="Kaminker J.S."/>
            <person name="Millburn G.H."/>
            <person name="Prochnik S.E."/>
            <person name="Smith C.D."/>
            <person name="Tupy J.L."/>
            <person name="Whitfield E.J."/>
            <person name="Bayraktaroglu L."/>
            <person name="Berman B.P."/>
            <person name="Bettencourt B.R."/>
            <person name="Celniker S.E."/>
            <person name="de Grey A.D.N.J."/>
            <person name="Drysdale R.A."/>
            <person name="Harris N.L."/>
            <person name="Richter J."/>
            <person name="Russo S."/>
            <person name="Schroeder A.J."/>
            <person name="Shu S.Q."/>
            <person name="Stapleton M."/>
            <person name="Yamada C."/>
            <person name="Ashburner M."/>
            <person name="Gelbart W.M."/>
            <person name="Rubin G.M."/>
            <person name="Lewis S.E."/>
        </authorList>
    </citation>
    <scope>GENOME REANNOTATION</scope>
    <source>
        <strain>Berkeley</strain>
    </source>
</reference>
<reference key="4">
    <citation type="journal article" date="2000" name="Science">
        <title>From sequence to chromosome: the tip of the X chromosome of D. melanogaster.</title>
        <authorList>
            <person name="Benos P.V."/>
            <person name="Gatt M.K."/>
            <person name="Ashburner M."/>
            <person name="Murphy L."/>
            <person name="Harris D."/>
            <person name="Barrell B.G."/>
            <person name="Ferraz C."/>
            <person name="Vidal S."/>
            <person name="Brun C."/>
            <person name="Demailles J."/>
            <person name="Cadieu E."/>
            <person name="Dreano S."/>
            <person name="Gloux S."/>
            <person name="Lelaure V."/>
            <person name="Mottier S."/>
            <person name="Galibert F."/>
            <person name="Borkova D."/>
            <person name="Minana B."/>
            <person name="Kafatos F.C."/>
            <person name="Louis C."/>
            <person name="Siden-Kiamos I."/>
            <person name="Bolshakov S."/>
            <person name="Papagiannakis G."/>
            <person name="Spanos L."/>
            <person name="Cox S."/>
            <person name="Madueno E."/>
            <person name="de Pablos B."/>
            <person name="Modolell J."/>
            <person name="Peter A."/>
            <person name="Schoettler P."/>
            <person name="Werner M."/>
            <person name="Mourkioti F."/>
            <person name="Beinert N."/>
            <person name="Dowe G."/>
            <person name="Schaefer U."/>
            <person name="Jaeckle H."/>
            <person name="Bucheton A."/>
            <person name="Callister D.M."/>
            <person name="Campbell L.A."/>
            <person name="Darlamitsou A."/>
            <person name="Henderson N.S."/>
            <person name="McMillan P.J."/>
            <person name="Salles C."/>
            <person name="Tait E.A."/>
            <person name="Valenti P."/>
            <person name="Saunders R.D.C."/>
            <person name="Glover D.M."/>
        </authorList>
    </citation>
    <scope>NUCLEOTIDE SEQUENCE [LARGE SCALE GENOMIC DNA]</scope>
    <source>
        <strain>Oregon-R</strain>
    </source>
</reference>
<reference key="5">
    <citation type="journal article" date="1999" name="Cell">
        <title>A spatial map of olfactory receptor expression in the Drosophila antenna.</title>
        <authorList>
            <person name="Vosshall L.B."/>
            <person name="Amrein H."/>
            <person name="Morozov P.S."/>
            <person name="Rzhetsky A."/>
            <person name="Axel R."/>
        </authorList>
    </citation>
    <scope>NUCLEOTIDE SEQUENCE [MRNA] OF 245-397</scope>
    <scope>TISSUE SPECIFICITY</scope>
    <source>
        <strain>Oregon-R</strain>
        <tissue>Antenna</tissue>
    </source>
</reference>
<reference key="6">
    <citation type="journal article" date="1999" name="Neuron">
        <title>A novel family of divergent seven-transmembrane proteins: candidate odorant receptors in Drosophila.</title>
        <authorList>
            <person name="Clyne P.J."/>
            <person name="Warr C.G."/>
            <person name="Freeman M.R."/>
            <person name="Lessing D."/>
            <person name="Kim J."/>
            <person name="Carlson J.R."/>
        </authorList>
    </citation>
    <scope>IDENTIFICATION</scope>
    <scope>TISSUE SPECIFICITY</scope>
</reference>
<reference key="7">
    <citation type="journal article" date="2000" name="Cell">
        <title>An olfactory sensory map in the fly brain.</title>
        <authorList>
            <person name="Vosshall L.B."/>
            <person name="Wong A.M."/>
            <person name="Axel R."/>
        </authorList>
    </citation>
    <scope>TISSUE SPECIFICITY</scope>
</reference>
<reference key="8">
    <citation type="journal article" date="2006" name="Cell">
        <title>Coding of odors by a receptor repertoire.</title>
        <authorList>
            <person name="Hallem E.A."/>
            <person name="Carlson J.R."/>
        </authorList>
    </citation>
    <scope>FUNCTION</scope>
</reference>
<reference key="9">
    <citation type="journal article" date="2011" name="J. Neurosci.">
        <title>Similar odorants elicit different behavioral and physiological responses, some supersustained.</title>
        <authorList>
            <person name="Montague S.A."/>
            <person name="Mathew D."/>
            <person name="Carlson J.R."/>
        </authorList>
    </citation>
    <scope>FUNCTION</scope>
</reference>
<organism>
    <name type="scientific">Drosophila melanogaster</name>
    <name type="common">Fruit fly</name>
    <dbReference type="NCBI Taxonomy" id="7227"/>
    <lineage>
        <taxon>Eukaryota</taxon>
        <taxon>Metazoa</taxon>
        <taxon>Ecdysozoa</taxon>
        <taxon>Arthropoda</taxon>
        <taxon>Hexapoda</taxon>
        <taxon>Insecta</taxon>
        <taxon>Pterygota</taxon>
        <taxon>Neoptera</taxon>
        <taxon>Endopterygota</taxon>
        <taxon>Diptera</taxon>
        <taxon>Brachycera</taxon>
        <taxon>Muscomorpha</taxon>
        <taxon>Ephydroidea</taxon>
        <taxon>Drosophilidae</taxon>
        <taxon>Drosophila</taxon>
        <taxon>Sophophora</taxon>
    </lineage>
</organism>
<sequence>MEKQEDFKLNTHSAVYYHWRVWELTGLMRPPGVSSLLYVVYSITVNLVVTVLFPLSLLARLLFTTNMAGLCENLTITITDIVANLKFANVYMVRKQLHEIRSLLRLMDARARLVGDPEEISALRKEVNIAQGTFRTFASIFVFGTTLSCVRVVVRPDRELLYPAWFGVDWMHSTRNYVLINIYQLFGLIVQAIQNCASDSYPPAFLCLLTGHMRALELRVRRIGCRTEKSNKGQTYEAWREEVYQELIECIRDLARVHRLREIIQRVLSVPCMAQFVCSAAVQCTVAMHFLYVADDHDHTAMIISIVFFSAVTLEVFVICYFGDRMRTQSEALCDAFYDCNWIEQLPKFKRELLFTLARTQRPSLIYAGNYIALSLETFEQVMRFTYSVFTLLLRAK</sequence>
<name>OR2A_DROME</name>
<protein>
    <recommendedName>
        <fullName>Odorant receptor 2a</fullName>
    </recommendedName>
</protein>
<proteinExistence type="evidence at transcript level"/>
<comment type="function">
    <text evidence="6 7">Odorant receptor which mediates acceptance or avoidance behavior, depending on its substrates. The odorant receptor repertoire encodes a large collection of odor stimuli that vary widely in identity, intensity, and duration. May form a complex with Orco to form odorant-sensing units, providing sensitive and prolonged odorant signaling and calcium permeability.</text>
</comment>
<comment type="subunit">
    <text evidence="1">Interacts with Orco. Complexes exist early in the endomembrane system in olfactory sensory neurons (OSNs), coupling these complexes to the conserved ciliary trafficking pathway (By similarity).</text>
</comment>
<comment type="subcellular location">
    <subcellularLocation>
        <location evidence="1">Cell membrane</location>
        <topology evidence="1">Multi-pass membrane protein</topology>
    </subcellularLocation>
</comment>
<comment type="tissue specificity">
    <text evidence="3 4 5">Expressed in 20 sensory neurons on the distal edge of the antenna.</text>
</comment>
<comment type="miscellaneous">
    <text>The atypical heteromeric and topological design of the odorant receptors appears to be an insect-specific solution for odor recognition, making the OR/Orco complex an attractive target for the development of highly selective insect repellents to disrupt olfactory-mediated host-seeking behaviors of insect disease vectors. Odor-evoked OR currents are independent of known G-protein-coupled second messenger pathways.</text>
</comment>
<comment type="similarity">
    <text evidence="8">Belongs to the insect chemoreceptor superfamily. Heteromeric odorant receptor channel (TC 1.A.69) family. Or2a subfamily.</text>
</comment>
<keyword id="KW-1003">Cell membrane</keyword>
<keyword id="KW-0472">Membrane</keyword>
<keyword id="KW-0552">Olfaction</keyword>
<keyword id="KW-0675">Receptor</keyword>
<keyword id="KW-1185">Reference proteome</keyword>
<keyword id="KW-0716">Sensory transduction</keyword>
<keyword id="KW-0807">Transducer</keyword>
<keyword id="KW-0812">Transmembrane</keyword>
<keyword id="KW-1133">Transmembrane helix</keyword>
<dbReference type="EMBL" id="AE014298">
    <property type="protein sequence ID" value="AAF45759.1"/>
    <property type="molecule type" value="Genomic_DNA"/>
</dbReference>
<dbReference type="EMBL" id="AL009195">
    <property type="protein sequence ID" value="CAA15703.1"/>
    <property type="molecule type" value="Genomic_DNA"/>
</dbReference>
<dbReference type="EMBL" id="AF127921">
    <property type="protein sequence ID" value="AAD26356.1"/>
    <property type="molecule type" value="mRNA"/>
</dbReference>
<dbReference type="PIR" id="T13426">
    <property type="entry name" value="T13426"/>
</dbReference>
<dbReference type="RefSeq" id="NP_525046.1">
    <property type="nucleotide sequence ID" value="NM_080307.2"/>
</dbReference>
<dbReference type="SMR" id="O46077"/>
<dbReference type="BioGRID" id="57744">
    <property type="interactions" value="1"/>
</dbReference>
<dbReference type="DIP" id="DIP-23378N"/>
<dbReference type="FunCoup" id="O46077">
    <property type="interactions" value="38"/>
</dbReference>
<dbReference type="STRING" id="7227.FBpp0070381"/>
<dbReference type="PaxDb" id="7227-FBpp0070381"/>
<dbReference type="EnsemblMetazoa" id="FBtr0070397">
    <property type="protein sequence ID" value="FBpp0070381"/>
    <property type="gene ID" value="FBgn0023523"/>
</dbReference>
<dbReference type="GeneID" id="31207"/>
<dbReference type="KEGG" id="dme:Dmel_CG3206"/>
<dbReference type="AGR" id="FB:FBgn0023523"/>
<dbReference type="CTD" id="31207"/>
<dbReference type="FlyBase" id="FBgn0023523">
    <property type="gene designation" value="Or2a"/>
</dbReference>
<dbReference type="VEuPathDB" id="VectorBase:FBgn0023523"/>
<dbReference type="eggNOG" id="ENOG502SAW0">
    <property type="taxonomic scope" value="Eukaryota"/>
</dbReference>
<dbReference type="GeneTree" id="ENSGT00540000073151"/>
<dbReference type="HOGENOM" id="CLU_033399_8_1_1"/>
<dbReference type="InParanoid" id="O46077"/>
<dbReference type="OMA" id="CYFGDRM"/>
<dbReference type="OrthoDB" id="6597368at2759"/>
<dbReference type="PhylomeDB" id="O46077"/>
<dbReference type="BioGRID-ORCS" id="31207">
    <property type="hits" value="0 hits in 1 CRISPR screen"/>
</dbReference>
<dbReference type="GenomeRNAi" id="31207"/>
<dbReference type="PRO" id="PR:O46077"/>
<dbReference type="Proteomes" id="UP000000803">
    <property type="component" value="Chromosome X"/>
</dbReference>
<dbReference type="Bgee" id="FBgn0023523">
    <property type="expression patterns" value="Expressed in adult olfactory receptor neuron Or2a (Drosophila) and 1 other cell type or tissue"/>
</dbReference>
<dbReference type="ExpressionAtlas" id="O46077">
    <property type="expression patterns" value="baseline and differential"/>
</dbReference>
<dbReference type="GO" id="GO:0032590">
    <property type="term" value="C:dendrite membrane"/>
    <property type="evidence" value="ECO:0000250"/>
    <property type="project" value="FlyBase"/>
</dbReference>
<dbReference type="GO" id="GO:0016020">
    <property type="term" value="C:membrane"/>
    <property type="evidence" value="ECO:0000303"/>
    <property type="project" value="UniProtKB"/>
</dbReference>
<dbReference type="GO" id="GO:0005886">
    <property type="term" value="C:plasma membrane"/>
    <property type="evidence" value="ECO:0007005"/>
    <property type="project" value="FlyBase"/>
</dbReference>
<dbReference type="GO" id="GO:0170020">
    <property type="term" value="F:ionotropic olfactory receptor activity"/>
    <property type="evidence" value="ECO:0007005"/>
    <property type="project" value="FlyBase"/>
</dbReference>
<dbReference type="GO" id="GO:0005549">
    <property type="term" value="F:odorant binding"/>
    <property type="evidence" value="ECO:0000250"/>
    <property type="project" value="FlyBase"/>
</dbReference>
<dbReference type="GO" id="GO:0004984">
    <property type="term" value="F:olfactory receptor activity"/>
    <property type="evidence" value="ECO:0000318"/>
    <property type="project" value="GO_Central"/>
</dbReference>
<dbReference type="GO" id="GO:0050911">
    <property type="term" value="P:detection of chemical stimulus involved in sensory perception of smell"/>
    <property type="evidence" value="ECO:0007005"/>
    <property type="project" value="FlyBase"/>
</dbReference>
<dbReference type="GO" id="GO:0007608">
    <property type="term" value="P:sensory perception of smell"/>
    <property type="evidence" value="ECO:0000270"/>
    <property type="project" value="FlyBase"/>
</dbReference>
<dbReference type="GO" id="GO:0007165">
    <property type="term" value="P:signal transduction"/>
    <property type="evidence" value="ECO:0007669"/>
    <property type="project" value="UniProtKB-KW"/>
</dbReference>
<dbReference type="InterPro" id="IPR004117">
    <property type="entry name" value="7tm6_olfct_rcpt"/>
</dbReference>
<dbReference type="PANTHER" id="PTHR21137">
    <property type="entry name" value="ODORANT RECEPTOR"/>
    <property type="match status" value="1"/>
</dbReference>
<dbReference type="PANTHER" id="PTHR21137:SF35">
    <property type="entry name" value="ODORANT RECEPTOR 19A-RELATED"/>
    <property type="match status" value="1"/>
</dbReference>
<dbReference type="Pfam" id="PF02949">
    <property type="entry name" value="7tm_6"/>
    <property type="match status" value="1"/>
</dbReference>
<feature type="chain" id="PRO_0000174225" description="Odorant receptor 2a">
    <location>
        <begin position="1"/>
        <end position="397"/>
    </location>
</feature>
<feature type="topological domain" description="Cytoplasmic" evidence="2">
    <location>
        <begin position="1"/>
        <end position="38"/>
    </location>
</feature>
<feature type="transmembrane region" description="Helical; Name=1" evidence="2">
    <location>
        <begin position="39"/>
        <end position="59"/>
    </location>
</feature>
<feature type="topological domain" description="Extracellular" evidence="2">
    <location>
        <begin position="60"/>
        <end position="72"/>
    </location>
</feature>
<feature type="transmembrane region" description="Helical; Name=2" evidence="2">
    <location>
        <begin position="73"/>
        <end position="92"/>
    </location>
</feature>
<feature type="topological domain" description="Cytoplasmic" evidence="2">
    <location>
        <begin position="93"/>
        <end position="131"/>
    </location>
</feature>
<feature type="transmembrane region" description="Helical; Name=3" evidence="2">
    <location>
        <begin position="132"/>
        <end position="150"/>
    </location>
</feature>
<feature type="topological domain" description="Extracellular" evidence="2">
    <location>
        <begin position="151"/>
        <end position="176"/>
    </location>
</feature>
<feature type="transmembrane region" description="Helical; Name=4" evidence="2">
    <location>
        <begin position="177"/>
        <end position="197"/>
    </location>
</feature>
<feature type="topological domain" description="Cytoplasmic" evidence="2">
    <location>
        <begin position="198"/>
        <end position="272"/>
    </location>
</feature>
<feature type="transmembrane region" description="Helical; Name=5" evidence="2">
    <location>
        <begin position="273"/>
        <end position="293"/>
    </location>
</feature>
<feature type="topological domain" description="Extracellular" evidence="2">
    <location>
        <begin position="294"/>
        <end position="301"/>
    </location>
</feature>
<feature type="transmembrane region" description="Helical; Name=6" evidence="2">
    <location>
        <begin position="302"/>
        <end position="322"/>
    </location>
</feature>
<feature type="topological domain" description="Cytoplasmic" evidence="2">
    <location>
        <begin position="323"/>
        <end position="363"/>
    </location>
</feature>
<feature type="transmembrane region" description="Helical; Name=7" evidence="2">
    <location>
        <begin position="364"/>
        <end position="383"/>
    </location>
</feature>
<feature type="topological domain" description="Extracellular" evidence="2">
    <location>
        <begin position="384"/>
        <end position="397"/>
    </location>
</feature>
<feature type="sequence conflict" description="In Ref. 1 and 4; CAA15703." evidence="8" ref="1 4">
    <original>VMRFTYSVFTLLLRAK</original>
    <variation>ARHNYIFKCPLI</variation>
    <location>
        <begin position="382"/>
        <end position="397"/>
    </location>
</feature>
<evidence type="ECO:0000250" key="1"/>
<evidence type="ECO:0000255" key="2"/>
<evidence type="ECO:0000269" key="3">
    <source>
    </source>
</evidence>
<evidence type="ECO:0000269" key="4">
    <source>
    </source>
</evidence>
<evidence type="ECO:0000269" key="5">
    <source>
    </source>
</evidence>
<evidence type="ECO:0000269" key="6">
    <source>
    </source>
</evidence>
<evidence type="ECO:0000269" key="7">
    <source>
    </source>
</evidence>
<evidence type="ECO:0000305" key="8"/>